<evidence type="ECO:0000269" key="1">
    <source>
    </source>
</evidence>
<evidence type="ECO:0000269" key="2">
    <source>
    </source>
</evidence>
<evidence type="ECO:0000269" key="3">
    <source>
    </source>
</evidence>
<evidence type="ECO:0000269" key="4">
    <source ref="2"/>
</evidence>
<evidence type="ECO:0000305" key="5"/>
<evidence type="ECO:0007744" key="6">
    <source>
        <dbReference type="PDB" id="6LQM"/>
    </source>
</evidence>
<evidence type="ECO:0007744" key="7">
    <source>
        <dbReference type="PDB" id="6LSR"/>
    </source>
</evidence>
<evidence type="ECO:0007744" key="8">
    <source>
        <dbReference type="PDB" id="6LU8"/>
    </source>
</evidence>
<evidence type="ECO:0007744" key="9">
    <source>
    </source>
</evidence>
<evidence type="ECO:0007744" key="10">
    <source>
    </source>
</evidence>
<evidence type="ECO:0007744" key="11">
    <source>
    </source>
</evidence>
<evidence type="ECO:0007744" key="12">
    <source>
    </source>
</evidence>
<evidence type="ECO:0007744" key="13">
    <source>
    </source>
</evidence>
<evidence type="ECO:0007744" key="14">
    <source>
    </source>
</evidence>
<evidence type="ECO:0007744" key="15">
    <source>
    </source>
</evidence>
<name>NMD3_HUMAN</name>
<feature type="chain" id="PRO_0000323561" description="60S ribosomal export protein NMD3">
    <location>
        <begin position="1"/>
        <end position="503"/>
    </location>
</feature>
<feature type="region of interest" description="Necessary for the nuclear export of the 60S ribosomal subunit" evidence="2">
    <location>
        <begin position="425"/>
        <end position="503"/>
    </location>
</feature>
<feature type="short sequence motif" description="Nuclear and nucleolar localization signal" evidence="2">
    <location>
        <begin position="405"/>
        <end position="422"/>
    </location>
</feature>
<feature type="short sequence motif" description="Nuclear export signal" evidence="2">
    <location>
        <begin position="480"/>
        <end position="489"/>
    </location>
</feature>
<feature type="modified residue" description="N-acetylmethionine" evidence="10 14">
    <location>
        <position position="1"/>
    </location>
</feature>
<feature type="modified residue" description="Phosphoserine" evidence="15">
    <location>
        <position position="258"/>
    </location>
</feature>
<feature type="modified residue" description="Phosphothreonine" evidence="9">
    <location>
        <position position="433"/>
    </location>
</feature>
<feature type="modified residue" description="Phosphoserine" evidence="9 11 12 15">
    <location>
        <position position="468"/>
    </location>
</feature>
<feature type="modified residue" description="Phosphothreonine" evidence="9 11 12 13 15">
    <location>
        <position position="470"/>
    </location>
</feature>
<feature type="sequence variant" id="VAR_039546" description="In dbSNP:rs12490341." evidence="4">
    <original>E</original>
    <variation>K</variation>
    <location>
        <position position="6"/>
    </location>
</feature>
<feature type="mutagenesis site" description="Reduces accumulation in the nucleus. Loss of nucleolar localization; when associated with A-406." evidence="2">
    <original>K</original>
    <variation>A</variation>
    <location>
        <position position="405"/>
    </location>
</feature>
<feature type="mutagenesis site" description="Reduces accumulation in the nucleus. Loss of nucleolar localization; when associated with A-405." evidence="2">
    <original>K</original>
    <variation>A</variation>
    <location>
        <position position="406"/>
    </location>
</feature>
<feature type="mutagenesis site" description="Reduces nuclear export." evidence="2">
    <original>L</original>
    <variation>A</variation>
    <location>
        <position position="480"/>
    </location>
</feature>
<feature type="mutagenesis site" description="Reduces nuclear export." evidence="1 2">
    <original>L</original>
    <variation>A</variation>
    <location>
        <position position="484"/>
    </location>
</feature>
<feature type="mutagenesis site" description="Reduces nuclear export." evidence="1 2">
    <original>L</original>
    <variation>A</variation>
    <location>
        <position position="487"/>
    </location>
</feature>
<feature type="sequence conflict" description="In Ref. 1; AAD27716." evidence="5" ref="1">
    <original>M</original>
    <variation>I</variation>
    <location>
        <position position="319"/>
    </location>
</feature>
<reference key="1">
    <citation type="journal article" date="2000" name="Genome Res.">
        <title>Identification of novel human genes evolutionarily conserved in Caenorhabditis elegans by comparative proteomics.</title>
        <authorList>
            <person name="Lai C.-H."/>
            <person name="Chou C.-Y."/>
            <person name="Ch'ang L.-Y."/>
            <person name="Liu C.-S."/>
            <person name="Lin W.-C."/>
        </authorList>
    </citation>
    <scope>NUCLEOTIDE SEQUENCE [LARGE SCALE MRNA]</scope>
</reference>
<reference key="2">
    <citation type="submission" date="2005-09" db="EMBL/GenBank/DDBJ databases">
        <authorList>
            <person name="Mural R.J."/>
            <person name="Istrail S."/>
            <person name="Sutton G.G."/>
            <person name="Florea L."/>
            <person name="Halpern A.L."/>
            <person name="Mobarry C.M."/>
            <person name="Lippert R."/>
            <person name="Walenz B."/>
            <person name="Shatkay H."/>
            <person name="Dew I."/>
            <person name="Miller J.R."/>
            <person name="Flanigan M.J."/>
            <person name="Edwards N.J."/>
            <person name="Bolanos R."/>
            <person name="Fasulo D."/>
            <person name="Halldorsson B.V."/>
            <person name="Hannenhalli S."/>
            <person name="Turner R."/>
            <person name="Yooseph S."/>
            <person name="Lu F."/>
            <person name="Nusskern D.R."/>
            <person name="Shue B.C."/>
            <person name="Zheng X.H."/>
            <person name="Zhong F."/>
            <person name="Delcher A.L."/>
            <person name="Huson D.H."/>
            <person name="Kravitz S.A."/>
            <person name="Mouchard L."/>
            <person name="Reinert K."/>
            <person name="Remington K.A."/>
            <person name="Clark A.G."/>
            <person name="Waterman M.S."/>
            <person name="Eichler E.E."/>
            <person name="Adams M.D."/>
            <person name="Hunkapiller M.W."/>
            <person name="Myers E.W."/>
            <person name="Venter J.C."/>
        </authorList>
    </citation>
    <scope>NUCLEOTIDE SEQUENCE [LARGE SCALE GENOMIC DNA]</scope>
    <scope>VARIANT LYS-6</scope>
</reference>
<reference key="3">
    <citation type="journal article" date="2004" name="Genome Res.">
        <title>The status, quality, and expansion of the NIH full-length cDNA project: the Mammalian Gene Collection (MGC).</title>
        <authorList>
            <consortium name="The MGC Project Team"/>
        </authorList>
    </citation>
    <scope>NUCLEOTIDE SEQUENCE [LARGE SCALE MRNA]</scope>
    <source>
        <tissue>Skeletal muscle</tissue>
    </source>
</reference>
<reference key="4">
    <citation type="journal article" date="2003" name="J. Cell Sci.">
        <title>Biogenesis and nuclear export of ribosomal subunits in higher eukaryotes depend on the CRM1 export pathway.</title>
        <authorList>
            <person name="Thomas F."/>
            <person name="Kutay U."/>
        </authorList>
    </citation>
    <scope>FUNCTION</scope>
    <scope>IDENTIFICATION IN A 60S RIBOSOMAL SUBUNIT COMPLEX WITH RAN AND XPO1</scope>
    <scope>INTERACTION WITH XPO1</scope>
    <scope>ASSOCIATION WITH THE 60S RIBOSOMAL SUBUNIT</scope>
    <scope>MUTAGENESIS OF LEU-484 AND LEU-487</scope>
    <scope>SUBCELLULAR LOCATION</scope>
</reference>
<reference key="5">
    <citation type="journal article" date="2003" name="EMBO J.">
        <title>Coordinated nuclear export of 60S ribosomal subunits and NMD3 in vertebrates.</title>
        <authorList>
            <person name="Trotta C.R."/>
            <person name="Lund E."/>
            <person name="Kahan L."/>
            <person name="Johnson A.W."/>
            <person name="Dahlberg J.E."/>
        </authorList>
    </citation>
    <scope>FUNCTION</scope>
    <scope>ASSOCIATION WITH THE 60S RIBOSOMAL SUBUNIT</scope>
    <scope>MUTAGENESIS OF LYS-405; LYS-406; LEU-480; LEU-484 AND LEU-487</scope>
    <scope>SUBCELLULAR LOCATION</scope>
</reference>
<reference key="6">
    <citation type="journal article" date="2008" name="Proc. Natl. Acad. Sci. U.S.A.">
        <title>A quantitative atlas of mitotic phosphorylation.</title>
        <authorList>
            <person name="Dephoure N."/>
            <person name="Zhou C."/>
            <person name="Villen J."/>
            <person name="Beausoleil S.A."/>
            <person name="Bakalarski C.E."/>
            <person name="Elledge S.J."/>
            <person name="Gygi S.P."/>
        </authorList>
    </citation>
    <scope>PHOSPHORYLATION [LARGE SCALE ANALYSIS] AT THR-433; SER-468 AND THR-470</scope>
    <scope>IDENTIFICATION BY MASS SPECTROMETRY [LARGE SCALE ANALYSIS]</scope>
    <source>
        <tissue>Cervix carcinoma</tissue>
    </source>
</reference>
<reference key="7">
    <citation type="journal article" date="2009" name="Anal. Chem.">
        <title>Lys-N and trypsin cover complementary parts of the phosphoproteome in a refined SCX-based approach.</title>
        <authorList>
            <person name="Gauci S."/>
            <person name="Helbig A.O."/>
            <person name="Slijper M."/>
            <person name="Krijgsveld J."/>
            <person name="Heck A.J."/>
            <person name="Mohammed S."/>
        </authorList>
    </citation>
    <scope>ACETYLATION [LARGE SCALE ANALYSIS] AT MET-1</scope>
    <scope>IDENTIFICATION BY MASS SPECTROMETRY [LARGE SCALE ANALYSIS]</scope>
</reference>
<reference key="8">
    <citation type="journal article" date="2009" name="Sci. Signal.">
        <title>Quantitative phosphoproteomic analysis of T cell receptor signaling reveals system-wide modulation of protein-protein interactions.</title>
        <authorList>
            <person name="Mayya V."/>
            <person name="Lundgren D.H."/>
            <person name="Hwang S.-I."/>
            <person name="Rezaul K."/>
            <person name="Wu L."/>
            <person name="Eng J.K."/>
            <person name="Rodionov V."/>
            <person name="Han D.K."/>
        </authorList>
    </citation>
    <scope>PHOSPHORYLATION [LARGE SCALE ANALYSIS] AT SER-468 AND THR-470</scope>
    <scope>IDENTIFICATION BY MASS SPECTROMETRY [LARGE SCALE ANALYSIS]</scope>
    <source>
        <tissue>Leukemic T-cell</tissue>
    </source>
</reference>
<reference key="9">
    <citation type="journal article" date="2010" name="Sci. Signal.">
        <title>Quantitative phosphoproteomics reveals widespread full phosphorylation site occupancy during mitosis.</title>
        <authorList>
            <person name="Olsen J.V."/>
            <person name="Vermeulen M."/>
            <person name="Santamaria A."/>
            <person name="Kumar C."/>
            <person name="Miller M.L."/>
            <person name="Jensen L.J."/>
            <person name="Gnad F."/>
            <person name="Cox J."/>
            <person name="Jensen T.S."/>
            <person name="Nigg E.A."/>
            <person name="Brunak S."/>
            <person name="Mann M."/>
        </authorList>
    </citation>
    <scope>PHOSPHORYLATION [LARGE SCALE ANALYSIS] AT SER-468 AND THR-470</scope>
    <scope>IDENTIFICATION BY MASS SPECTROMETRY [LARGE SCALE ANALYSIS]</scope>
    <source>
        <tissue>Cervix carcinoma</tissue>
    </source>
</reference>
<reference key="10">
    <citation type="journal article" date="2011" name="BMC Syst. Biol.">
        <title>Initial characterization of the human central proteome.</title>
        <authorList>
            <person name="Burkard T.R."/>
            <person name="Planyavsky M."/>
            <person name="Kaupe I."/>
            <person name="Breitwieser F.P."/>
            <person name="Buerckstuemmer T."/>
            <person name="Bennett K.L."/>
            <person name="Superti-Furga G."/>
            <person name="Colinge J."/>
        </authorList>
    </citation>
    <scope>IDENTIFICATION BY MASS SPECTROMETRY [LARGE SCALE ANALYSIS]</scope>
</reference>
<reference key="11">
    <citation type="journal article" date="2011" name="Sci. Signal.">
        <title>System-wide temporal characterization of the proteome and phosphoproteome of human embryonic stem cell differentiation.</title>
        <authorList>
            <person name="Rigbolt K.T."/>
            <person name="Prokhorova T.A."/>
            <person name="Akimov V."/>
            <person name="Henningsen J."/>
            <person name="Johansen P.T."/>
            <person name="Kratchmarova I."/>
            <person name="Kassem M."/>
            <person name="Mann M."/>
            <person name="Olsen J.V."/>
            <person name="Blagoev B."/>
        </authorList>
    </citation>
    <scope>PHOSPHORYLATION [LARGE SCALE ANALYSIS] AT THR-470</scope>
    <scope>IDENTIFICATION BY MASS SPECTROMETRY [LARGE SCALE ANALYSIS]</scope>
</reference>
<reference key="12">
    <citation type="journal article" date="2012" name="Proc. Natl. Acad. Sci. U.S.A.">
        <title>N-terminal acetylome analyses and functional insights of the N-terminal acetyltransferase NatB.</title>
        <authorList>
            <person name="Van Damme P."/>
            <person name="Lasa M."/>
            <person name="Polevoda B."/>
            <person name="Gazquez C."/>
            <person name="Elosegui-Artola A."/>
            <person name="Kim D.S."/>
            <person name="De Juan-Pardo E."/>
            <person name="Demeyer K."/>
            <person name="Hole K."/>
            <person name="Larrea E."/>
            <person name="Timmerman E."/>
            <person name="Prieto J."/>
            <person name="Arnesen T."/>
            <person name="Sherman F."/>
            <person name="Gevaert K."/>
            <person name="Aldabe R."/>
        </authorList>
    </citation>
    <scope>ACETYLATION [LARGE SCALE ANALYSIS] AT MET-1</scope>
    <scope>IDENTIFICATION BY MASS SPECTROMETRY [LARGE SCALE ANALYSIS]</scope>
</reference>
<reference key="13">
    <citation type="journal article" date="2013" name="J. Proteome Res.">
        <title>Toward a comprehensive characterization of a human cancer cell phosphoproteome.</title>
        <authorList>
            <person name="Zhou H."/>
            <person name="Di Palma S."/>
            <person name="Preisinger C."/>
            <person name="Peng M."/>
            <person name="Polat A.N."/>
            <person name="Heck A.J."/>
            <person name="Mohammed S."/>
        </authorList>
    </citation>
    <scope>PHOSPHORYLATION [LARGE SCALE ANALYSIS] AT SER-258; SER-468 AND THR-470</scope>
    <scope>IDENTIFICATION BY MASS SPECTROMETRY [LARGE SCALE ANALYSIS]</scope>
    <source>
        <tissue>Cervix carcinoma</tissue>
        <tissue>Erythroleukemia</tissue>
    </source>
</reference>
<reference key="14">
    <citation type="journal article" date="2014" name="J. Proteomics">
        <title>An enzyme assisted RP-RPLC approach for in-depth analysis of human liver phosphoproteome.</title>
        <authorList>
            <person name="Bian Y."/>
            <person name="Song C."/>
            <person name="Cheng K."/>
            <person name="Dong M."/>
            <person name="Wang F."/>
            <person name="Huang J."/>
            <person name="Sun D."/>
            <person name="Wang L."/>
            <person name="Ye M."/>
            <person name="Zou H."/>
        </authorList>
    </citation>
    <scope>IDENTIFICATION BY MASS SPECTROMETRY [LARGE SCALE ANALYSIS]</scope>
    <source>
        <tissue>Liver</tissue>
    </source>
</reference>
<reference evidence="6 7 8" key="15">
    <citation type="journal article" date="2020" name="Nat. Commun.">
        <title>Structural snapshots of human pre-60S ribosomal particles before and after nuclear export.</title>
        <authorList>
            <person name="Liang X."/>
            <person name="Zuo M.Q."/>
            <person name="Zhang Y."/>
            <person name="Li N."/>
            <person name="Ma C."/>
            <person name="Dong M.Q."/>
            <person name="Gao N."/>
        </authorList>
    </citation>
    <scope>STRUCTURE BY ELECTRON MICROSCOPY (3.09 ANGSTROMS) IN COMPLEX WITH PRE-60S RIBOSOMAL PARTICLES</scope>
    <scope>INTERACTION WITH PRE-60S RIBOSOMAL PARTICLES</scope>
</reference>
<dbReference type="EMBL" id="AF132941">
    <property type="protein sequence ID" value="AAD27716.1"/>
    <property type="molecule type" value="mRNA"/>
</dbReference>
<dbReference type="EMBL" id="CH471052">
    <property type="protein sequence ID" value="EAW78618.1"/>
    <property type="molecule type" value="Genomic_DNA"/>
</dbReference>
<dbReference type="EMBL" id="CH471052">
    <property type="protein sequence ID" value="EAW78619.1"/>
    <property type="molecule type" value="Genomic_DNA"/>
</dbReference>
<dbReference type="EMBL" id="BC013317">
    <property type="protein sequence ID" value="AAH13317.1"/>
    <property type="molecule type" value="mRNA"/>
</dbReference>
<dbReference type="CCDS" id="CCDS3194.1"/>
<dbReference type="RefSeq" id="NP_057022.2">
    <property type="nucleotide sequence ID" value="NM_015938.4"/>
</dbReference>
<dbReference type="RefSeq" id="XP_005247568.1">
    <property type="nucleotide sequence ID" value="XM_005247511.3"/>
</dbReference>
<dbReference type="RefSeq" id="XP_005247569.1">
    <property type="nucleotide sequence ID" value="XM_005247512.2"/>
</dbReference>
<dbReference type="RefSeq" id="XP_054202690.1">
    <property type="nucleotide sequence ID" value="XM_054346715.1"/>
</dbReference>
<dbReference type="RefSeq" id="XP_054202691.1">
    <property type="nucleotide sequence ID" value="XM_054346716.1"/>
</dbReference>
<dbReference type="PDB" id="6LQM">
    <property type="method" value="EM"/>
    <property type="resolution" value="3.09 A"/>
    <property type="chains" value="3=1-503"/>
</dbReference>
<dbReference type="PDB" id="6LSR">
    <property type="method" value="EM"/>
    <property type="resolution" value="3.13 A"/>
    <property type="chains" value="3=1-503"/>
</dbReference>
<dbReference type="PDB" id="6LU8">
    <property type="method" value="EM"/>
    <property type="resolution" value="3.13 A"/>
    <property type="chains" value="3=1-503"/>
</dbReference>
<dbReference type="PDBsum" id="6LQM"/>
<dbReference type="PDBsum" id="6LSR"/>
<dbReference type="PDBsum" id="6LU8"/>
<dbReference type="EMDB" id="EMD-0948"/>
<dbReference type="EMDB" id="EMD-0963"/>
<dbReference type="EMDB" id="EMD-0978"/>
<dbReference type="SMR" id="Q96D46"/>
<dbReference type="BioGRID" id="119259">
    <property type="interactions" value="132"/>
</dbReference>
<dbReference type="CORUM" id="Q96D46"/>
<dbReference type="DIP" id="DIP-53427N"/>
<dbReference type="FunCoup" id="Q96D46">
    <property type="interactions" value="3357"/>
</dbReference>
<dbReference type="IntAct" id="Q96D46">
    <property type="interactions" value="61"/>
</dbReference>
<dbReference type="MINT" id="Q96D46"/>
<dbReference type="STRING" id="9606.ENSP00000417559"/>
<dbReference type="GlyGen" id="Q96D46">
    <property type="glycosylation" value="1 site, 1 O-linked glycan (1 site)"/>
</dbReference>
<dbReference type="iPTMnet" id="Q96D46"/>
<dbReference type="MetOSite" id="Q96D46"/>
<dbReference type="PhosphoSitePlus" id="Q96D46"/>
<dbReference type="BioMuta" id="NMD3"/>
<dbReference type="DMDM" id="74731412"/>
<dbReference type="jPOST" id="Q96D46"/>
<dbReference type="MassIVE" id="Q96D46"/>
<dbReference type="PaxDb" id="9606-ENSP00000419004"/>
<dbReference type="PeptideAtlas" id="Q96D46"/>
<dbReference type="ProteomicsDB" id="76251"/>
<dbReference type="Pumba" id="Q96D46"/>
<dbReference type="Antibodypedia" id="33677">
    <property type="antibodies" value="127 antibodies from 27 providers"/>
</dbReference>
<dbReference type="DNASU" id="51068"/>
<dbReference type="Ensembl" id="ENST00000351193.7">
    <property type="protein sequence ID" value="ENSP00000307525.2"/>
    <property type="gene ID" value="ENSG00000169251.13"/>
</dbReference>
<dbReference type="Ensembl" id="ENST00000460469.1">
    <property type="protein sequence ID" value="ENSP00000419004.1"/>
    <property type="gene ID" value="ENSG00000169251.13"/>
</dbReference>
<dbReference type="GeneID" id="51068"/>
<dbReference type="KEGG" id="hsa:51068"/>
<dbReference type="MANE-Select" id="ENST00000351193.7">
    <property type="protein sequence ID" value="ENSP00000307525.2"/>
    <property type="RefSeq nucleotide sequence ID" value="NM_015938.5"/>
    <property type="RefSeq protein sequence ID" value="NP_057022.2"/>
</dbReference>
<dbReference type="UCSC" id="uc003feb.2">
    <property type="organism name" value="human"/>
</dbReference>
<dbReference type="AGR" id="HGNC:24250"/>
<dbReference type="CTD" id="51068"/>
<dbReference type="DisGeNET" id="51068"/>
<dbReference type="GeneCards" id="NMD3"/>
<dbReference type="HGNC" id="HGNC:24250">
    <property type="gene designation" value="NMD3"/>
</dbReference>
<dbReference type="HPA" id="ENSG00000169251">
    <property type="expression patterns" value="Low tissue specificity"/>
</dbReference>
<dbReference type="MIM" id="611021">
    <property type="type" value="gene"/>
</dbReference>
<dbReference type="neXtProt" id="NX_Q96D46"/>
<dbReference type="OpenTargets" id="ENSG00000169251"/>
<dbReference type="PharmGKB" id="PA134884140"/>
<dbReference type="VEuPathDB" id="HostDB:ENSG00000169251"/>
<dbReference type="eggNOG" id="KOG2613">
    <property type="taxonomic scope" value="Eukaryota"/>
</dbReference>
<dbReference type="GeneTree" id="ENSGT00390000005104"/>
<dbReference type="HOGENOM" id="CLU_027444_2_0_1"/>
<dbReference type="InParanoid" id="Q96D46"/>
<dbReference type="OMA" id="VILVRKH"/>
<dbReference type="OrthoDB" id="203821at2759"/>
<dbReference type="PAN-GO" id="Q96D46">
    <property type="GO annotations" value="4 GO annotations based on evolutionary models"/>
</dbReference>
<dbReference type="PhylomeDB" id="Q96D46"/>
<dbReference type="TreeFam" id="TF105744"/>
<dbReference type="PathwayCommons" id="Q96D46"/>
<dbReference type="SignaLink" id="Q96D46"/>
<dbReference type="BioGRID-ORCS" id="51068">
    <property type="hits" value="757 hits in 1158 CRISPR screens"/>
</dbReference>
<dbReference type="CD-CODE" id="91857CE7">
    <property type="entry name" value="Nucleolus"/>
</dbReference>
<dbReference type="ChiTaRS" id="NMD3">
    <property type="organism name" value="human"/>
</dbReference>
<dbReference type="GeneWiki" id="NMD3"/>
<dbReference type="GenomeRNAi" id="51068"/>
<dbReference type="Pharos" id="Q96D46">
    <property type="development level" value="Tbio"/>
</dbReference>
<dbReference type="PRO" id="PR:Q96D46"/>
<dbReference type="Proteomes" id="UP000005640">
    <property type="component" value="Chromosome 3"/>
</dbReference>
<dbReference type="RNAct" id="Q96D46">
    <property type="molecule type" value="protein"/>
</dbReference>
<dbReference type="Bgee" id="ENSG00000169251">
    <property type="expression patterns" value="Expressed in endothelial cell and 204 other cell types or tissues"/>
</dbReference>
<dbReference type="ExpressionAtlas" id="Q96D46">
    <property type="expression patterns" value="baseline and differential"/>
</dbReference>
<dbReference type="GO" id="GO:0005737">
    <property type="term" value="C:cytoplasm"/>
    <property type="evidence" value="ECO:0000314"/>
    <property type="project" value="ParkinsonsUK-UCL"/>
</dbReference>
<dbReference type="GO" id="GO:0016020">
    <property type="term" value="C:membrane"/>
    <property type="evidence" value="ECO:0007005"/>
    <property type="project" value="UniProtKB"/>
</dbReference>
<dbReference type="GO" id="GO:0005730">
    <property type="term" value="C:nucleolus"/>
    <property type="evidence" value="ECO:0000314"/>
    <property type="project" value="ParkinsonsUK-UCL"/>
</dbReference>
<dbReference type="GO" id="GO:0005654">
    <property type="term" value="C:nucleoplasm"/>
    <property type="evidence" value="ECO:0000314"/>
    <property type="project" value="ParkinsonsUK-UCL"/>
</dbReference>
<dbReference type="GO" id="GO:0005634">
    <property type="term" value="C:nucleus"/>
    <property type="evidence" value="ECO:0000318"/>
    <property type="project" value="GO_Central"/>
</dbReference>
<dbReference type="GO" id="GO:0030674">
    <property type="term" value="F:protein-macromolecule adaptor activity"/>
    <property type="evidence" value="ECO:0000314"/>
    <property type="project" value="ParkinsonsUK-UCL"/>
</dbReference>
<dbReference type="GO" id="GO:0043023">
    <property type="term" value="F:ribosomal large subunit binding"/>
    <property type="evidence" value="ECO:0000314"/>
    <property type="project" value="ParkinsonsUK-UCL"/>
</dbReference>
<dbReference type="GO" id="GO:0003723">
    <property type="term" value="F:RNA binding"/>
    <property type="evidence" value="ECO:0007005"/>
    <property type="project" value="UniProtKB"/>
</dbReference>
<dbReference type="GO" id="GO:0032092">
    <property type="term" value="P:positive regulation of protein binding"/>
    <property type="evidence" value="ECO:0000315"/>
    <property type="project" value="ParkinsonsUK-UCL"/>
</dbReference>
<dbReference type="GO" id="GO:1904751">
    <property type="term" value="P:positive regulation of protein localization to nucleolus"/>
    <property type="evidence" value="ECO:0000315"/>
    <property type="project" value="ParkinsonsUK-UCL"/>
</dbReference>
<dbReference type="GO" id="GO:1902680">
    <property type="term" value="P:positive regulation of RNA biosynthetic process"/>
    <property type="evidence" value="ECO:0000315"/>
    <property type="project" value="ParkinsonsUK-UCL"/>
</dbReference>
<dbReference type="GO" id="GO:0015031">
    <property type="term" value="P:protein transport"/>
    <property type="evidence" value="ECO:0007669"/>
    <property type="project" value="UniProtKB-KW"/>
</dbReference>
<dbReference type="GO" id="GO:0000055">
    <property type="term" value="P:ribosomal large subunit export from nucleus"/>
    <property type="evidence" value="ECO:0000315"/>
    <property type="project" value="ParkinsonsUK-UCL"/>
</dbReference>
<dbReference type="InterPro" id="IPR039768">
    <property type="entry name" value="Nmd3"/>
</dbReference>
<dbReference type="InterPro" id="IPR007064">
    <property type="entry name" value="Nmd3_N"/>
</dbReference>
<dbReference type="InterPro" id="IPR048898">
    <property type="entry name" value="NMD3_OB"/>
</dbReference>
<dbReference type="InterPro" id="IPR048899">
    <property type="entry name" value="NMD_SH3"/>
</dbReference>
<dbReference type="PANTHER" id="PTHR12746:SF2">
    <property type="entry name" value="60S RIBOSOMAL EXPORT PROTEIN NMD3"/>
    <property type="match status" value="1"/>
</dbReference>
<dbReference type="PANTHER" id="PTHR12746">
    <property type="entry name" value="NONSENSE-MEDIATED MRNA DECAY PROTEIN 3"/>
    <property type="match status" value="1"/>
</dbReference>
<dbReference type="Pfam" id="PF04981">
    <property type="entry name" value="NMD3"/>
    <property type="match status" value="1"/>
</dbReference>
<dbReference type="Pfam" id="PF21192">
    <property type="entry name" value="NMD3_OB"/>
    <property type="match status" value="1"/>
</dbReference>
<dbReference type="Pfam" id="PF21193">
    <property type="entry name" value="NMD_SH3"/>
    <property type="match status" value="1"/>
</dbReference>
<comment type="function">
    <text evidence="1 2">Acts as an adapter for the XPO1/CRM1-mediated export of the 60S ribosomal subunit.</text>
</comment>
<comment type="subunit">
    <text evidence="1 3">Found in a 60S ribosomal subunit export complex with RAN and XPO1 (PubMed:12724356). Interacts with XPO1. Associates with pre-60S ribosomal particles (PubMed:12724356, PubMed:32669547).</text>
</comment>
<comment type="subcellular location">
    <subcellularLocation>
        <location evidence="1 2">Cytoplasm</location>
    </subcellularLocation>
    <subcellularLocation>
        <location evidence="1 2">Nucleus</location>
    </subcellularLocation>
    <text evidence="1 2">Shuttles between the nucleus/nucleolus and the cytoplasm in a XPO1/CRM1-dependent manner.</text>
</comment>
<comment type="similarity">
    <text evidence="5">Belongs to the NMD3 family.</text>
</comment>
<sequence>MEYMAESTDRSPGHILCCECGVPISPNPANICVACLRSKVDISQGIPKQVSISFCKQCQRYFQPPGTWIQCALESRELLALCLKKIKAPLSKVRLVDAGFVWTEPHSKRLKVKLTIQKEVMNGAILQQVFVVDYVVQSQMCGDCHRVEAKDFWKAVIQVRQKTLHKKTFYYLEQLILKYGMHQNTLRIKEIHDGLDFYYSSKQHAQKMVEFLQCTVPCRYKASQRLISQDIHSNTYNYKSTFSVEIVPICKDNVVCLSPKLAQSLGNMNQICVCIRVTSAIHLIDPNTLQVADIDGSTFWSHPFNSLCHPKQLEEFIVMECSIVQDIKRAAGAGMISKKHTLGEVWVQKTSEMNTDKQYFCRTHLGHLLNPGDLVLGFDLANCNLNDEHVNKMNSDRVPDVVLIKKSYDRTKRQRRRNWKLKELARERENMDTDDERQYQDFLEDLEEDEAIRKNVNIYRDSAIPVESDTDDEGAPRISLAEMLEDLHISQDATGEEGASMLT</sequence>
<accession>Q96D46</accession>
<accession>D3DNM7</accession>
<accession>Q9Y2Z6</accession>
<proteinExistence type="evidence at protein level"/>
<organism>
    <name type="scientific">Homo sapiens</name>
    <name type="common">Human</name>
    <dbReference type="NCBI Taxonomy" id="9606"/>
    <lineage>
        <taxon>Eukaryota</taxon>
        <taxon>Metazoa</taxon>
        <taxon>Chordata</taxon>
        <taxon>Craniata</taxon>
        <taxon>Vertebrata</taxon>
        <taxon>Euteleostomi</taxon>
        <taxon>Mammalia</taxon>
        <taxon>Eutheria</taxon>
        <taxon>Euarchontoglires</taxon>
        <taxon>Primates</taxon>
        <taxon>Haplorrhini</taxon>
        <taxon>Catarrhini</taxon>
        <taxon>Hominidae</taxon>
        <taxon>Homo</taxon>
    </lineage>
</organism>
<gene>
    <name type="primary">NMD3</name>
    <name type="ORF">CGI-07</name>
</gene>
<protein>
    <recommendedName>
        <fullName>60S ribosomal export protein NMD3</fullName>
        <shortName>hNMD3</shortName>
    </recommendedName>
</protein>
<keyword id="KW-0002">3D-structure</keyword>
<keyword id="KW-0007">Acetylation</keyword>
<keyword id="KW-0963">Cytoplasm</keyword>
<keyword id="KW-0539">Nucleus</keyword>
<keyword id="KW-0597">Phosphoprotein</keyword>
<keyword id="KW-0653">Protein transport</keyword>
<keyword id="KW-1267">Proteomics identification</keyword>
<keyword id="KW-1185">Reference proteome</keyword>
<keyword id="KW-0813">Transport</keyword>